<name>FTCD_CHICK</name>
<evidence type="ECO:0000250" key="1"/>
<evidence type="ECO:0000250" key="2">
    <source>
        <dbReference type="UniProtKB" id="O88618"/>
    </source>
</evidence>
<evidence type="ECO:0000250" key="3">
    <source>
        <dbReference type="UniProtKB" id="O95954"/>
    </source>
</evidence>
<evidence type="ECO:0000255" key="4"/>
<evidence type="ECO:0000269" key="5">
    <source>
    </source>
</evidence>
<evidence type="ECO:0000305" key="6"/>
<evidence type="ECO:0000305" key="7">
    <source>
    </source>
</evidence>
<protein>
    <recommendedName>
        <fullName evidence="7">Formimidoyltransferase-cyclodeaminase</fullName>
    </recommendedName>
    <alternativeName>
        <fullName>Formiminotransferase-cyclodeaminase</fullName>
        <shortName>FTCD</shortName>
    </alternativeName>
    <alternativeName>
        <fullName>p60</fullName>
    </alternativeName>
    <domain>
        <recommendedName>
            <fullName evidence="7">Glutamate formimidoyltransferase</fullName>
            <ecNumber evidence="5">2.1.2.5</ecNumber>
        </recommendedName>
        <alternativeName>
            <fullName>Glutamate formiminotransferase</fullName>
        </alternativeName>
        <alternativeName>
            <fullName>Glutamate formyltransferase</fullName>
        </alternativeName>
    </domain>
    <domain>
        <recommendedName>
            <fullName evidence="7">Formimidoyltetrahydrofolate cyclodeaminase</fullName>
            <ecNumber evidence="5">4.3.1.4</ecNumber>
        </recommendedName>
        <alternativeName>
            <fullName>Formiminotetrahydrofolate cyclodeaminase</fullName>
        </alternativeName>
    </domain>
</protein>
<accession>Q9YH58</accession>
<gene>
    <name type="primary">FTCD</name>
</gene>
<sequence length="541" mass="59154">MAKLVECVPNFSEGCNKEVIEALGRAISQTPGCTLLDVDAGASTNRTVYTFVGTPEAVVEGALSAARMAWELIDMSRHKGEHPRMGALDVCPFVPVMNISMEECVICAHVFGQRLSEELGVPVYLYGEAARQESRRTLPAIRAGEYEALPKKLEKPEWVPDFGPPAFVPQWGATVTGARTFLIAYNINLLCTKELAHRIALNIREQGRGADQPGSLKKVQGIGWYLEEENIAQVSTNLLDFETTPLHAVYEEVCYNAEALKLPVVGSQLVGLVPKKAMLDAAEFYIKKEKLFILEEEHKIKLVVSRLGLDSLSPFNPRERIIEYLVQAGQEDKGLVTKPLGAFVRAVGGRSAAPGGGSVAATAASLGAALGCMVGLMSYGKRQFEQLDSIMRNVIPPLHQAMDELVAMVDADSRAFSSYMEAMKLPKSTPEERERRVVAMQQGLKTAVEVPCTLAVKVNNLWSSLKMLAHHGNLACKSDLQVGAKMLEAAVFGAYFNVMINLKDITDEKFKTETSQMVTRLLEEAKQGSALVLALLEKREA</sequence>
<comment type="function">
    <text evidence="5">Folate-dependent enzyme, that displays both transferase and deaminase activity. Serves to channel one-carbon units from formiminoglutamate to the folate pool.</text>
</comment>
<comment type="function">
    <text evidence="2">Binds and promotes bundling of vimentin filaments originating from the Golgi.</text>
</comment>
<comment type="catalytic activity">
    <reaction evidence="5">
        <text>5-formimidoyltetrahydrofolate + L-glutamate = N-formimidoyl-L-glutamate + (6S)-5,6,7,8-tetrahydrofolate</text>
        <dbReference type="Rhea" id="RHEA:15097"/>
        <dbReference type="ChEBI" id="CHEBI:29985"/>
        <dbReference type="ChEBI" id="CHEBI:57453"/>
        <dbReference type="ChEBI" id="CHEBI:57456"/>
        <dbReference type="ChEBI" id="CHEBI:58928"/>
        <dbReference type="EC" id="2.1.2.5"/>
    </reaction>
    <physiologicalReaction direction="right-to-left" evidence="7">
        <dbReference type="Rhea" id="RHEA:15099"/>
    </physiologicalReaction>
</comment>
<comment type="catalytic activity">
    <reaction evidence="5">
        <text>5-formimidoyltetrahydrofolate + 2 H(+) = (6R)-5,10-methenyltetrahydrofolate + NH4(+)</text>
        <dbReference type="Rhea" id="RHEA:22736"/>
        <dbReference type="ChEBI" id="CHEBI:15378"/>
        <dbReference type="ChEBI" id="CHEBI:28938"/>
        <dbReference type="ChEBI" id="CHEBI:57455"/>
        <dbReference type="ChEBI" id="CHEBI:57456"/>
        <dbReference type="EC" id="4.3.1.4"/>
    </reaction>
    <physiologicalReaction direction="left-to-right" evidence="7">
        <dbReference type="Rhea" id="RHEA:22737"/>
    </physiologicalReaction>
</comment>
<comment type="pathway">
    <text evidence="7">Amino-acid degradation; L-histidine degradation into L-glutamate; L-glutamate from N-formimidoyl-L-glutamate (transferase route): step 1/1.</text>
</comment>
<comment type="subunit">
    <text evidence="2">Homooctamer, including four polyglutamate binding sites. The subunits are arranged as a tetramer of dimers, and form a planar ring-shaped structure.</text>
</comment>
<comment type="subcellular location">
    <subcellularLocation>
        <location evidence="5">Cytoplasm</location>
        <location evidence="5">Cytosol</location>
    </subcellularLocation>
    <subcellularLocation>
        <location evidence="5">Golgi apparatus</location>
    </subcellularLocation>
    <subcellularLocation>
        <location evidence="3">Cytoplasm</location>
        <location evidence="3">Cytoskeleton</location>
        <location evidence="3">Microtubule organizing center</location>
        <location evidence="3">Centrosome</location>
        <location evidence="3">Centriole</location>
    </subcellularLocation>
    <text evidence="3">More abundantly located around the mother centriole.</text>
</comment>
<comment type="similarity">
    <text evidence="6">In the C-terminal section; belongs to the cyclodeaminase/cyclohydrolase family.</text>
</comment>
<comment type="similarity">
    <text evidence="6">In the N-terminal section; belongs to the formiminotransferase family.</text>
</comment>
<keyword id="KW-0963">Cytoplasm</keyword>
<keyword id="KW-0206">Cytoskeleton</keyword>
<keyword id="KW-0290">Folate-binding</keyword>
<keyword id="KW-0333">Golgi apparatus</keyword>
<keyword id="KW-0369">Histidine metabolism</keyword>
<keyword id="KW-0456">Lyase</keyword>
<keyword id="KW-0511">Multifunctional enzyme</keyword>
<keyword id="KW-1185">Reference proteome</keyword>
<keyword id="KW-0808">Transferase</keyword>
<dbReference type="EC" id="2.1.2.5" evidence="5"/>
<dbReference type="EC" id="4.3.1.4" evidence="5"/>
<dbReference type="EMBL" id="AJ224473">
    <property type="protein sequence ID" value="CAA11966.1"/>
    <property type="molecule type" value="mRNA"/>
</dbReference>
<dbReference type="RefSeq" id="NP_990234.1">
    <property type="nucleotide sequence ID" value="NM_204903.1"/>
</dbReference>
<dbReference type="SMR" id="Q9YH58"/>
<dbReference type="FunCoup" id="Q9YH58">
    <property type="interactions" value="40"/>
</dbReference>
<dbReference type="STRING" id="9031.ENSGALP00000009880"/>
<dbReference type="PaxDb" id="9031-ENSGALP00000009880"/>
<dbReference type="GeneID" id="395726"/>
<dbReference type="KEGG" id="gga:395726"/>
<dbReference type="CTD" id="10841"/>
<dbReference type="VEuPathDB" id="HostDB:geneid_395726"/>
<dbReference type="eggNOG" id="ENOG502QQBY">
    <property type="taxonomic scope" value="Eukaryota"/>
</dbReference>
<dbReference type="InParanoid" id="Q9YH58"/>
<dbReference type="OrthoDB" id="48036at2759"/>
<dbReference type="PhylomeDB" id="Q9YH58"/>
<dbReference type="BRENDA" id="2.1.2.5">
    <property type="organism ID" value="1306"/>
</dbReference>
<dbReference type="BRENDA" id="4.3.1.4">
    <property type="organism ID" value="1306"/>
</dbReference>
<dbReference type="UniPathway" id="UPA00379">
    <property type="reaction ID" value="UER00555"/>
</dbReference>
<dbReference type="PRO" id="PR:Q9YH58"/>
<dbReference type="Proteomes" id="UP000000539">
    <property type="component" value="Unassembled WGS sequence"/>
</dbReference>
<dbReference type="GO" id="GO:0005814">
    <property type="term" value="C:centriole"/>
    <property type="evidence" value="ECO:0007669"/>
    <property type="project" value="UniProtKB-SubCell"/>
</dbReference>
<dbReference type="GO" id="GO:0005829">
    <property type="term" value="C:cytosol"/>
    <property type="evidence" value="ECO:0000314"/>
    <property type="project" value="UniProtKB"/>
</dbReference>
<dbReference type="GO" id="GO:0005794">
    <property type="term" value="C:Golgi apparatus"/>
    <property type="evidence" value="ECO:0000314"/>
    <property type="project" value="UniProtKB"/>
</dbReference>
<dbReference type="GO" id="GO:0005542">
    <property type="term" value="F:folic acid binding"/>
    <property type="evidence" value="ECO:0007669"/>
    <property type="project" value="UniProtKB-KW"/>
</dbReference>
<dbReference type="GO" id="GO:0030412">
    <property type="term" value="F:formimidoyltetrahydrofolate cyclodeaminase activity"/>
    <property type="evidence" value="ECO:0000314"/>
    <property type="project" value="UniProtKB"/>
</dbReference>
<dbReference type="GO" id="GO:0030409">
    <property type="term" value="F:glutamate formimidoyltransferase activity"/>
    <property type="evidence" value="ECO:0000314"/>
    <property type="project" value="UniProtKB"/>
</dbReference>
<dbReference type="GO" id="GO:0019556">
    <property type="term" value="P:L-histidine catabolic process to glutamate and formamide"/>
    <property type="evidence" value="ECO:0007669"/>
    <property type="project" value="UniProtKB-UniPathway"/>
</dbReference>
<dbReference type="GO" id="GO:0019557">
    <property type="term" value="P:L-histidine catabolic process to glutamate and formate"/>
    <property type="evidence" value="ECO:0007669"/>
    <property type="project" value="UniProtKB-UniPathway"/>
</dbReference>
<dbReference type="FunFam" id="1.20.120.680:FF:000001">
    <property type="entry name" value="Formimidoyltransferase cyclodeaminase"/>
    <property type="match status" value="1"/>
</dbReference>
<dbReference type="FunFam" id="3.30.70.670:FF:000001">
    <property type="entry name" value="Formimidoyltransferase cyclodeaminase"/>
    <property type="match status" value="1"/>
</dbReference>
<dbReference type="FunFam" id="3.30.990.10:FF:000001">
    <property type="entry name" value="Formimidoyltransferase cyclodeaminase"/>
    <property type="match status" value="1"/>
</dbReference>
<dbReference type="Gene3D" id="1.20.120.680">
    <property type="entry name" value="Formiminotetrahydrofolate cyclodeaminase monomer, up-and-down helical bundle"/>
    <property type="match status" value="1"/>
</dbReference>
<dbReference type="Gene3D" id="3.30.70.670">
    <property type="entry name" value="Formiminotransferase, C-terminal subdomain"/>
    <property type="match status" value="1"/>
</dbReference>
<dbReference type="Gene3D" id="3.30.990.10">
    <property type="entry name" value="Formiminotransferase, N-terminal subdomain"/>
    <property type="match status" value="1"/>
</dbReference>
<dbReference type="InterPro" id="IPR007044">
    <property type="entry name" value="Cyclodeamin/CycHdrlase"/>
</dbReference>
<dbReference type="InterPro" id="IPR013802">
    <property type="entry name" value="Formiminotransferase_C"/>
</dbReference>
<dbReference type="InterPro" id="IPR037070">
    <property type="entry name" value="Formiminotransferase_C_sf"/>
</dbReference>
<dbReference type="InterPro" id="IPR004227">
    <property type="entry name" value="Formiminotransferase_cat"/>
</dbReference>
<dbReference type="InterPro" id="IPR012886">
    <property type="entry name" value="Formiminotransferase_N"/>
</dbReference>
<dbReference type="InterPro" id="IPR037064">
    <property type="entry name" value="Formiminotransferase_N_sf"/>
</dbReference>
<dbReference type="InterPro" id="IPR022384">
    <property type="entry name" value="FormiminoTrfase_cat_dom_sf"/>
</dbReference>
<dbReference type="InterPro" id="IPR036178">
    <property type="entry name" value="Formintransfe-cycloase-like_sf"/>
</dbReference>
<dbReference type="InterPro" id="IPR051623">
    <property type="entry name" value="FTCD"/>
</dbReference>
<dbReference type="NCBIfam" id="TIGR02024">
    <property type="entry name" value="FtcD"/>
    <property type="match status" value="1"/>
</dbReference>
<dbReference type="PANTHER" id="PTHR12234:SF0">
    <property type="entry name" value="FORMIMIDOYLTRANSFERASE-CYCLODEAMINASE"/>
    <property type="match status" value="1"/>
</dbReference>
<dbReference type="PANTHER" id="PTHR12234">
    <property type="entry name" value="FORMIMINOTRANSFERASE-CYCLODEAMINASE"/>
    <property type="match status" value="1"/>
</dbReference>
<dbReference type="Pfam" id="PF02971">
    <property type="entry name" value="FTCD"/>
    <property type="match status" value="1"/>
</dbReference>
<dbReference type="Pfam" id="PF04961">
    <property type="entry name" value="FTCD_C"/>
    <property type="match status" value="1"/>
</dbReference>
<dbReference type="Pfam" id="PF07837">
    <property type="entry name" value="FTCD_N"/>
    <property type="match status" value="1"/>
</dbReference>
<dbReference type="SMART" id="SM01221">
    <property type="entry name" value="FTCD"/>
    <property type="match status" value="1"/>
</dbReference>
<dbReference type="SMART" id="SM01222">
    <property type="entry name" value="FTCD_N"/>
    <property type="match status" value="1"/>
</dbReference>
<dbReference type="SUPFAM" id="SSF55116">
    <property type="entry name" value="Formiminotransferase domain of formiminotransferase-cyclodeaminase"/>
    <property type="match status" value="2"/>
</dbReference>
<dbReference type="SUPFAM" id="SSF101262">
    <property type="entry name" value="Methenyltetrahydrofolate cyclohydrolase-like"/>
    <property type="match status" value="1"/>
</dbReference>
<feature type="chain" id="PRO_0000285576" description="Formimidoyltransferase-cyclodeaminase">
    <location>
        <begin position="1"/>
        <end position="541"/>
    </location>
</feature>
<feature type="region of interest" description="Formiminotransferase N-subdomain" evidence="1">
    <location>
        <begin position="1"/>
        <end position="181"/>
    </location>
</feature>
<feature type="region of interest" description="Formiminotransferase C-subdomain" evidence="1">
    <location>
        <begin position="182"/>
        <end position="326"/>
    </location>
</feature>
<feature type="region of interest" description="Linker" evidence="1">
    <location>
        <begin position="327"/>
        <end position="334"/>
    </location>
</feature>
<feature type="region of interest" description="Cyclodeaminase/cyclohydrolase" evidence="1">
    <location>
        <begin position="335"/>
        <end position="541"/>
    </location>
</feature>
<feature type="active site" description="For formimidoyltransferase activity" evidence="1">
    <location>
        <position position="82"/>
    </location>
</feature>
<feature type="active site" description="For cyclodeaminase activity" evidence="1">
    <location>
        <position position="412"/>
    </location>
</feature>
<feature type="binding site" evidence="4">
    <location>
        <begin position="163"/>
        <end position="172"/>
    </location>
    <ligand>
        <name>folate</name>
        <dbReference type="ChEBI" id="CHEBI:62501"/>
    </ligand>
</feature>
<organism>
    <name type="scientific">Gallus gallus</name>
    <name type="common">Chicken</name>
    <dbReference type="NCBI Taxonomy" id="9031"/>
    <lineage>
        <taxon>Eukaryota</taxon>
        <taxon>Metazoa</taxon>
        <taxon>Chordata</taxon>
        <taxon>Craniata</taxon>
        <taxon>Vertebrata</taxon>
        <taxon>Euteleostomi</taxon>
        <taxon>Archelosauria</taxon>
        <taxon>Archosauria</taxon>
        <taxon>Dinosauria</taxon>
        <taxon>Saurischia</taxon>
        <taxon>Theropoda</taxon>
        <taxon>Coelurosauria</taxon>
        <taxon>Aves</taxon>
        <taxon>Neognathae</taxon>
        <taxon>Galloanserae</taxon>
        <taxon>Galliformes</taxon>
        <taxon>Phasianidae</taxon>
        <taxon>Phasianinae</taxon>
        <taxon>Gallus</taxon>
    </lineage>
</organism>
<proteinExistence type="evidence at protein level"/>
<reference key="1">
    <citation type="journal article" date="1998" name="J. Biol. Chem.">
        <title>A formiminotransferase cyclodeaminase isoform is localized to the Golgi complex and can mediate interaction of trans-Golgi network-derived vesicles with microtubules.</title>
        <authorList>
            <person name="Hennig D."/>
            <person name="Scales S.J."/>
            <person name="Moreau A."/>
            <person name="Murley L.L."/>
            <person name="De Mey J."/>
            <person name="Kreis T.E."/>
        </authorList>
    </citation>
    <scope>NUCLEOTIDE SEQUENCE [MRNA]</scope>
    <scope>FUNCTION</scope>
    <scope>CATALYTIC ACTIVITY</scope>
    <scope>PATHWAY</scope>
    <scope>SUBCELLULAR LOCATION</scope>
    <source>
        <tissue>Liver</tissue>
    </source>
</reference>